<keyword id="KW-0687">Ribonucleoprotein</keyword>
<keyword id="KW-0689">Ribosomal protein</keyword>
<keyword id="KW-0694">RNA-binding</keyword>
<keyword id="KW-0699">rRNA-binding</keyword>
<keyword id="KW-0820">tRNA-binding</keyword>
<protein>
    <recommendedName>
        <fullName evidence="1">Large ribosomal subunit protein uL16</fullName>
    </recommendedName>
    <alternativeName>
        <fullName evidence="2">50S ribosomal protein L16</fullName>
    </alternativeName>
</protein>
<reference key="1">
    <citation type="journal article" date="2010" name="J. Bacteriol.">
        <title>Whole genome sequences of two Xylella fastidiosa strains (M12 and M23) causing almond leaf scorch disease in California.</title>
        <authorList>
            <person name="Chen J."/>
            <person name="Xie G."/>
            <person name="Han S."/>
            <person name="Chertkov O."/>
            <person name="Sims D."/>
            <person name="Civerolo E.L."/>
        </authorList>
    </citation>
    <scope>NUCLEOTIDE SEQUENCE [LARGE SCALE GENOMIC DNA]</scope>
    <source>
        <strain>M12</strain>
    </source>
</reference>
<accession>B0U5K6</accession>
<organism>
    <name type="scientific">Xylella fastidiosa (strain M12)</name>
    <dbReference type="NCBI Taxonomy" id="405440"/>
    <lineage>
        <taxon>Bacteria</taxon>
        <taxon>Pseudomonadati</taxon>
        <taxon>Pseudomonadota</taxon>
        <taxon>Gammaproteobacteria</taxon>
        <taxon>Lysobacterales</taxon>
        <taxon>Lysobacteraceae</taxon>
        <taxon>Xylella</taxon>
    </lineage>
</organism>
<feature type="chain" id="PRO_1000143054" description="Large ribosomal subunit protein uL16">
    <location>
        <begin position="1"/>
        <end position="137"/>
    </location>
</feature>
<name>RL16_XYLFM</name>
<gene>
    <name evidence="1" type="primary">rplP</name>
    <name type="ordered locus">Xfasm12_0501</name>
</gene>
<sequence length="137" mass="15492">MLQPKRTKYRKMHKGRNCGLSWNANVVSFGQYGLRATAHGQLTARQIEAARRSISRYVKRGGKLLIRVFPDKPITKKPIEVRMGSGKGNVEYWVAQIQPGRMIYEIEGVSEDVAREAFRLAASKLSVTTAFVVRTVR</sequence>
<comment type="function">
    <text evidence="1">Binds 23S rRNA and is also seen to make contacts with the A and possibly P site tRNAs.</text>
</comment>
<comment type="subunit">
    <text evidence="1">Part of the 50S ribosomal subunit.</text>
</comment>
<comment type="similarity">
    <text evidence="1">Belongs to the universal ribosomal protein uL16 family.</text>
</comment>
<proteinExistence type="inferred from homology"/>
<evidence type="ECO:0000255" key="1">
    <source>
        <dbReference type="HAMAP-Rule" id="MF_01342"/>
    </source>
</evidence>
<evidence type="ECO:0000305" key="2"/>
<dbReference type="EMBL" id="CP000941">
    <property type="protein sequence ID" value="ACA11510.1"/>
    <property type="molecule type" value="Genomic_DNA"/>
</dbReference>
<dbReference type="RefSeq" id="WP_004086531.1">
    <property type="nucleotide sequence ID" value="NC_010513.1"/>
</dbReference>
<dbReference type="SMR" id="B0U5K6"/>
<dbReference type="GeneID" id="93904146"/>
<dbReference type="KEGG" id="xfm:Xfasm12_0501"/>
<dbReference type="HOGENOM" id="CLU_078858_2_1_6"/>
<dbReference type="GO" id="GO:0022625">
    <property type="term" value="C:cytosolic large ribosomal subunit"/>
    <property type="evidence" value="ECO:0007669"/>
    <property type="project" value="TreeGrafter"/>
</dbReference>
<dbReference type="GO" id="GO:0019843">
    <property type="term" value="F:rRNA binding"/>
    <property type="evidence" value="ECO:0007669"/>
    <property type="project" value="UniProtKB-UniRule"/>
</dbReference>
<dbReference type="GO" id="GO:0003735">
    <property type="term" value="F:structural constituent of ribosome"/>
    <property type="evidence" value="ECO:0007669"/>
    <property type="project" value="InterPro"/>
</dbReference>
<dbReference type="GO" id="GO:0000049">
    <property type="term" value="F:tRNA binding"/>
    <property type="evidence" value="ECO:0007669"/>
    <property type="project" value="UniProtKB-KW"/>
</dbReference>
<dbReference type="GO" id="GO:0006412">
    <property type="term" value="P:translation"/>
    <property type="evidence" value="ECO:0007669"/>
    <property type="project" value="UniProtKB-UniRule"/>
</dbReference>
<dbReference type="CDD" id="cd01433">
    <property type="entry name" value="Ribosomal_L16_L10e"/>
    <property type="match status" value="1"/>
</dbReference>
<dbReference type="FunFam" id="3.90.1170.10:FF:000001">
    <property type="entry name" value="50S ribosomal protein L16"/>
    <property type="match status" value="1"/>
</dbReference>
<dbReference type="Gene3D" id="3.90.1170.10">
    <property type="entry name" value="Ribosomal protein L10e/L16"/>
    <property type="match status" value="1"/>
</dbReference>
<dbReference type="HAMAP" id="MF_01342">
    <property type="entry name" value="Ribosomal_uL16"/>
    <property type="match status" value="1"/>
</dbReference>
<dbReference type="InterPro" id="IPR047873">
    <property type="entry name" value="Ribosomal_uL16"/>
</dbReference>
<dbReference type="InterPro" id="IPR000114">
    <property type="entry name" value="Ribosomal_uL16_bact-type"/>
</dbReference>
<dbReference type="InterPro" id="IPR020798">
    <property type="entry name" value="Ribosomal_uL16_CS"/>
</dbReference>
<dbReference type="InterPro" id="IPR016180">
    <property type="entry name" value="Ribosomal_uL16_dom"/>
</dbReference>
<dbReference type="InterPro" id="IPR036920">
    <property type="entry name" value="Ribosomal_uL16_sf"/>
</dbReference>
<dbReference type="NCBIfam" id="TIGR01164">
    <property type="entry name" value="rplP_bact"/>
    <property type="match status" value="1"/>
</dbReference>
<dbReference type="PANTHER" id="PTHR12220">
    <property type="entry name" value="50S/60S RIBOSOMAL PROTEIN L16"/>
    <property type="match status" value="1"/>
</dbReference>
<dbReference type="PANTHER" id="PTHR12220:SF13">
    <property type="entry name" value="LARGE RIBOSOMAL SUBUNIT PROTEIN UL16M"/>
    <property type="match status" value="1"/>
</dbReference>
<dbReference type="Pfam" id="PF00252">
    <property type="entry name" value="Ribosomal_L16"/>
    <property type="match status" value="1"/>
</dbReference>
<dbReference type="PRINTS" id="PR00060">
    <property type="entry name" value="RIBOSOMALL16"/>
</dbReference>
<dbReference type="SUPFAM" id="SSF54686">
    <property type="entry name" value="Ribosomal protein L16p/L10e"/>
    <property type="match status" value="1"/>
</dbReference>
<dbReference type="PROSITE" id="PS00701">
    <property type="entry name" value="RIBOSOMAL_L16_2"/>
    <property type="match status" value="1"/>
</dbReference>